<feature type="chain" id="PRO_1000074914" description="Serine hydroxymethyltransferase">
    <location>
        <begin position="1"/>
        <end position="412"/>
    </location>
</feature>
<feature type="binding site" evidence="1">
    <location>
        <position position="117"/>
    </location>
    <ligand>
        <name>(6S)-5,6,7,8-tetrahydrofolate</name>
        <dbReference type="ChEBI" id="CHEBI:57453"/>
    </ligand>
</feature>
<feature type="binding site" evidence="1">
    <location>
        <begin position="121"/>
        <end position="123"/>
    </location>
    <ligand>
        <name>(6S)-5,6,7,8-tetrahydrofolate</name>
        <dbReference type="ChEBI" id="CHEBI:57453"/>
    </ligand>
</feature>
<feature type="site" description="Plays an important role in substrate specificity" evidence="1">
    <location>
        <position position="225"/>
    </location>
</feature>
<feature type="modified residue" description="N6-(pyridoxal phosphate)lysine" evidence="1">
    <location>
        <position position="226"/>
    </location>
</feature>
<proteinExistence type="inferred from homology"/>
<accession>A8YY80</accession>
<keyword id="KW-0028">Amino-acid biosynthesis</keyword>
<keyword id="KW-0963">Cytoplasm</keyword>
<keyword id="KW-0554">One-carbon metabolism</keyword>
<keyword id="KW-0663">Pyridoxal phosphate</keyword>
<keyword id="KW-0808">Transferase</keyword>
<evidence type="ECO:0000255" key="1">
    <source>
        <dbReference type="HAMAP-Rule" id="MF_00051"/>
    </source>
</evidence>
<protein>
    <recommendedName>
        <fullName evidence="1">Serine hydroxymethyltransferase</fullName>
        <shortName evidence="1">SHMT</shortName>
        <shortName evidence="1">Serine methylase</shortName>
        <ecNumber evidence="1">2.1.2.1</ecNumber>
    </recommendedName>
</protein>
<organism>
    <name type="scientific">Staphylococcus aureus (strain USA300 / TCH1516)</name>
    <dbReference type="NCBI Taxonomy" id="451516"/>
    <lineage>
        <taxon>Bacteria</taxon>
        <taxon>Bacillati</taxon>
        <taxon>Bacillota</taxon>
        <taxon>Bacilli</taxon>
        <taxon>Bacillales</taxon>
        <taxon>Staphylococcaceae</taxon>
        <taxon>Staphylococcus</taxon>
    </lineage>
</organism>
<gene>
    <name evidence="1" type="primary">glyA</name>
    <name type="ordered locus">USA300HOU_2103</name>
</gene>
<sequence>MSYITKQDKVIAEAIEREFQRQNSNIELIASENFVSEAVMEAQGSVLTNKYAEGYPGRRYYGGCEFVDVTESIAIDRAKALFGAEHVNVQPHSGSQANMAVYLVALGMGDTVLGMNLSHGGHLTHGAPVNFSGKFYNFVEYGVDKDTERINYDEVRKLALEHKPKLIVAGASAYSRTIDFKKFKEIADEVNAKLMVDMAHIAGLVAAGLHPNPVEYADFVTTTTHKTLRGPRGGMILCKEEYKKDIDKTIFPGIQGGPLEHVIAAKAVAFGEALENNFKTYQQQVVKNAKVLAEALINEGFRIVSGGTDNHLVAVDVKGSIGLTGKEAEETLDSVGITCNKNTIPFDQEKPFVTSGIRLGTPAATTRGFDEKAFEEVAKIISLALKNSKDEEKLQQAKERVAKLTAEYPLYQ</sequence>
<reference key="1">
    <citation type="journal article" date="2007" name="BMC Microbiol.">
        <title>Subtle genetic changes enhance virulence of methicillin resistant and sensitive Staphylococcus aureus.</title>
        <authorList>
            <person name="Highlander S.K."/>
            <person name="Hulten K.G."/>
            <person name="Qin X."/>
            <person name="Jiang H."/>
            <person name="Yerrapragada S."/>
            <person name="Mason E.O. Jr."/>
            <person name="Shang Y."/>
            <person name="Williams T.M."/>
            <person name="Fortunov R.M."/>
            <person name="Liu Y."/>
            <person name="Igboeli O."/>
            <person name="Petrosino J."/>
            <person name="Tirumalai M."/>
            <person name="Uzman A."/>
            <person name="Fox G.E."/>
            <person name="Cardenas A.M."/>
            <person name="Muzny D.M."/>
            <person name="Hemphill L."/>
            <person name="Ding Y."/>
            <person name="Dugan S."/>
            <person name="Blyth P.R."/>
            <person name="Buhay C.J."/>
            <person name="Dinh H.H."/>
            <person name="Hawes A.C."/>
            <person name="Holder M."/>
            <person name="Kovar C.L."/>
            <person name="Lee S.L."/>
            <person name="Liu W."/>
            <person name="Nazareth L.V."/>
            <person name="Wang Q."/>
            <person name="Zhou J."/>
            <person name="Kaplan S.L."/>
            <person name="Weinstock G.M."/>
        </authorList>
    </citation>
    <scope>NUCLEOTIDE SEQUENCE [LARGE SCALE GENOMIC DNA]</scope>
    <source>
        <strain>USA300 / TCH1516</strain>
    </source>
</reference>
<comment type="function">
    <text evidence="1">Catalyzes the reversible interconversion of serine and glycine with tetrahydrofolate (THF) serving as the one-carbon carrier. This reaction serves as the major source of one-carbon groups required for the biosynthesis of purines, thymidylate, methionine, and other important biomolecules. Also exhibits THF-independent aldolase activity toward beta-hydroxyamino acids, producing glycine and aldehydes, via a retro-aldol mechanism.</text>
</comment>
<comment type="catalytic activity">
    <reaction evidence="1">
        <text>(6R)-5,10-methylene-5,6,7,8-tetrahydrofolate + glycine + H2O = (6S)-5,6,7,8-tetrahydrofolate + L-serine</text>
        <dbReference type="Rhea" id="RHEA:15481"/>
        <dbReference type="ChEBI" id="CHEBI:15377"/>
        <dbReference type="ChEBI" id="CHEBI:15636"/>
        <dbReference type="ChEBI" id="CHEBI:33384"/>
        <dbReference type="ChEBI" id="CHEBI:57305"/>
        <dbReference type="ChEBI" id="CHEBI:57453"/>
        <dbReference type="EC" id="2.1.2.1"/>
    </reaction>
</comment>
<comment type="cofactor">
    <cofactor evidence="1">
        <name>pyridoxal 5'-phosphate</name>
        <dbReference type="ChEBI" id="CHEBI:597326"/>
    </cofactor>
</comment>
<comment type="pathway">
    <text evidence="1">One-carbon metabolism; tetrahydrofolate interconversion.</text>
</comment>
<comment type="pathway">
    <text evidence="1">Amino-acid biosynthesis; glycine biosynthesis; glycine from L-serine: step 1/1.</text>
</comment>
<comment type="subunit">
    <text evidence="1">Homodimer.</text>
</comment>
<comment type="subcellular location">
    <subcellularLocation>
        <location evidence="1">Cytoplasm</location>
    </subcellularLocation>
</comment>
<comment type="similarity">
    <text evidence="1">Belongs to the SHMT family.</text>
</comment>
<dbReference type="EC" id="2.1.2.1" evidence="1"/>
<dbReference type="EMBL" id="CP000730">
    <property type="protein sequence ID" value="ABX30100.1"/>
    <property type="molecule type" value="Genomic_DNA"/>
</dbReference>
<dbReference type="RefSeq" id="WP_000120500.1">
    <property type="nucleotide sequence ID" value="NC_010079.1"/>
</dbReference>
<dbReference type="SMR" id="A8YY80"/>
<dbReference type="KEGG" id="sax:USA300HOU_2103"/>
<dbReference type="HOGENOM" id="CLU_022477_2_1_9"/>
<dbReference type="UniPathway" id="UPA00193"/>
<dbReference type="UniPathway" id="UPA00288">
    <property type="reaction ID" value="UER01023"/>
</dbReference>
<dbReference type="GO" id="GO:0005829">
    <property type="term" value="C:cytosol"/>
    <property type="evidence" value="ECO:0007669"/>
    <property type="project" value="TreeGrafter"/>
</dbReference>
<dbReference type="GO" id="GO:0004372">
    <property type="term" value="F:glycine hydroxymethyltransferase activity"/>
    <property type="evidence" value="ECO:0007669"/>
    <property type="project" value="UniProtKB-UniRule"/>
</dbReference>
<dbReference type="GO" id="GO:0030170">
    <property type="term" value="F:pyridoxal phosphate binding"/>
    <property type="evidence" value="ECO:0007669"/>
    <property type="project" value="UniProtKB-UniRule"/>
</dbReference>
<dbReference type="GO" id="GO:0019264">
    <property type="term" value="P:glycine biosynthetic process from serine"/>
    <property type="evidence" value="ECO:0007669"/>
    <property type="project" value="UniProtKB-UniRule"/>
</dbReference>
<dbReference type="GO" id="GO:0035999">
    <property type="term" value="P:tetrahydrofolate interconversion"/>
    <property type="evidence" value="ECO:0007669"/>
    <property type="project" value="UniProtKB-UniRule"/>
</dbReference>
<dbReference type="CDD" id="cd00378">
    <property type="entry name" value="SHMT"/>
    <property type="match status" value="1"/>
</dbReference>
<dbReference type="FunFam" id="3.40.640.10:FF:000001">
    <property type="entry name" value="Serine hydroxymethyltransferase"/>
    <property type="match status" value="1"/>
</dbReference>
<dbReference type="FunFam" id="3.90.1150.10:FF:000003">
    <property type="entry name" value="Serine hydroxymethyltransferase"/>
    <property type="match status" value="1"/>
</dbReference>
<dbReference type="Gene3D" id="3.90.1150.10">
    <property type="entry name" value="Aspartate Aminotransferase, domain 1"/>
    <property type="match status" value="1"/>
</dbReference>
<dbReference type="Gene3D" id="3.40.640.10">
    <property type="entry name" value="Type I PLP-dependent aspartate aminotransferase-like (Major domain)"/>
    <property type="match status" value="1"/>
</dbReference>
<dbReference type="HAMAP" id="MF_00051">
    <property type="entry name" value="SHMT"/>
    <property type="match status" value="1"/>
</dbReference>
<dbReference type="InterPro" id="IPR015424">
    <property type="entry name" value="PyrdxlP-dep_Trfase"/>
</dbReference>
<dbReference type="InterPro" id="IPR015421">
    <property type="entry name" value="PyrdxlP-dep_Trfase_major"/>
</dbReference>
<dbReference type="InterPro" id="IPR015422">
    <property type="entry name" value="PyrdxlP-dep_Trfase_small"/>
</dbReference>
<dbReference type="InterPro" id="IPR001085">
    <property type="entry name" value="Ser_HO-MeTrfase"/>
</dbReference>
<dbReference type="InterPro" id="IPR049943">
    <property type="entry name" value="Ser_HO-MeTrfase-like"/>
</dbReference>
<dbReference type="InterPro" id="IPR019798">
    <property type="entry name" value="Ser_HO-MeTrfase_PLP_BS"/>
</dbReference>
<dbReference type="InterPro" id="IPR039429">
    <property type="entry name" value="SHMT-like_dom"/>
</dbReference>
<dbReference type="NCBIfam" id="NF000586">
    <property type="entry name" value="PRK00011.1"/>
    <property type="match status" value="1"/>
</dbReference>
<dbReference type="PANTHER" id="PTHR11680">
    <property type="entry name" value="SERINE HYDROXYMETHYLTRANSFERASE"/>
    <property type="match status" value="1"/>
</dbReference>
<dbReference type="PANTHER" id="PTHR11680:SF35">
    <property type="entry name" value="SERINE HYDROXYMETHYLTRANSFERASE 1"/>
    <property type="match status" value="1"/>
</dbReference>
<dbReference type="Pfam" id="PF00464">
    <property type="entry name" value="SHMT"/>
    <property type="match status" value="1"/>
</dbReference>
<dbReference type="PIRSF" id="PIRSF000412">
    <property type="entry name" value="SHMT"/>
    <property type="match status" value="1"/>
</dbReference>
<dbReference type="SUPFAM" id="SSF53383">
    <property type="entry name" value="PLP-dependent transferases"/>
    <property type="match status" value="1"/>
</dbReference>
<dbReference type="PROSITE" id="PS00096">
    <property type="entry name" value="SHMT"/>
    <property type="match status" value="1"/>
</dbReference>
<name>GLYA_STAAT</name>